<comment type="function">
    <text evidence="1">Substrate-recognition component of a cullin-5-RING E3 ubiquitin-protein ligase complex (ECS complex, also named CRL5 complex), which mediates the ubiquitination and subsequent proteasomal degradation of target proteins, such as EPOR and GHR. Specifically recognizes and binds phosphorylated proteins via its SH2 domain, promoting their ubiquitination. The ECS(SOCS2) complex acts as a key regulator of growth hormone receptor (GHR) levels by mediating ubiquitination and degradation of GHR, following GHR phosphorylation by JAK2. The ECS(SOCS2) also catalyzes ubiquitination and degradation of JAK2-phosphorylated EPOR.</text>
</comment>
<comment type="pathway">
    <text evidence="1">Protein modification; protein ubiquitination.</text>
</comment>
<comment type="subunit">
    <text evidence="1">Substrate-recognition component of the ECS(SOCS2) complex, composed of SOCS2, CUL5, ELOB, ELOC and RNF7/RBX2. Interacts with IGF1R. Interacts with DCUN1D1.</text>
</comment>
<comment type="subcellular location">
    <subcellularLocation>
        <location evidence="1">Cytoplasm</location>
    </subcellularLocation>
</comment>
<comment type="domain">
    <text evidence="1">The SOCS box domain mediates the interaction with the Elongin BC complex, an adapter module in different E3 ubiquitin ligase complexes.</text>
</comment>
<comment type="PTM">
    <text evidence="1 2">Ubiquitinated; mediated by AREL1 and leading to its subsequent proteasomal degradation. Ubiquitination is dependent on its phosphorylation at Ser-52, by PKC (By similarity). Ubiquitination is stimulated by LPS (By similarity).</text>
</comment>
<comment type="PTM">
    <text evidence="1">Phosphorylation at Ser-52 by PKC facilitates its ubiquitination and proteasomal degradation.</text>
</comment>
<accession>Q861R0</accession>
<accession>Q1RMX0</accession>
<reference key="1">
    <citation type="submission" date="2002-11" db="EMBL/GenBank/DDBJ databases">
        <title>Comparative genome analysis of the murine high-growth locus in cattle and swine.</title>
        <authorList>
            <person name="Smith T.P.L."/>
            <person name="Nonneman D.J."/>
            <person name="Farber C.R."/>
            <person name="Wong M.S."/>
            <person name="Bennett G.L."/>
            <person name="Harhay G.P."/>
            <person name="Snelling W.C."/>
            <person name="Rohrer G.A."/>
            <person name="Page B.T."/>
            <person name="Medrano J.F."/>
        </authorList>
    </citation>
    <scope>NUCLEOTIDE SEQUENCE [GENOMIC DNA / MRNA]</scope>
</reference>
<reference key="2">
    <citation type="submission" date="2006-04" db="EMBL/GenBank/DDBJ databases">
        <authorList>
            <consortium name="NIH - Mammalian Gene Collection (MGC) project"/>
        </authorList>
    </citation>
    <scope>NUCLEOTIDE SEQUENCE [LARGE SCALE MRNA]</scope>
    <source>
        <strain>Hereford</strain>
        <tissue>Uterus</tissue>
    </source>
</reference>
<proteinExistence type="evidence at transcript level"/>
<sequence length="198" mass="22214">MTLRCLESSGNGAEGAQSQWGTAGSAEEPSPEAARLAKALRELSHTGWYWGSMTVNEAKEKLKEAPEGTFLIRDSSHSDYLLTISVKTSAGPTNLRIEYQDGKFRLDSIICVKSKLKQFDSVVHLIDYYVQMCKDKRTGPEAPRNGTVHLYLTKPLYTSAPPLQHLCRLTINKCTSTVWGLPLPTRLKDYLEEYKFQV</sequence>
<name>SOCS2_BOVIN</name>
<gene>
    <name type="primary">SOCS2</name>
</gene>
<dbReference type="EMBL" id="AY183451">
    <property type="protein sequence ID" value="AAO45009.1"/>
    <property type="molecule type" value="Genomic_DNA"/>
</dbReference>
<dbReference type="EMBL" id="AY183452">
    <property type="protein sequence ID" value="AAO45010.1"/>
    <property type="molecule type" value="mRNA"/>
</dbReference>
<dbReference type="EMBL" id="BC114662">
    <property type="protein sequence ID" value="AAI14663.1"/>
    <property type="molecule type" value="mRNA"/>
</dbReference>
<dbReference type="RefSeq" id="NP_803489.1">
    <property type="nucleotide sequence ID" value="NM_177523.2"/>
</dbReference>
<dbReference type="RefSeq" id="XP_005206158.1">
    <property type="nucleotide sequence ID" value="XM_005206101.5"/>
</dbReference>
<dbReference type="RefSeq" id="XP_005206159.1">
    <property type="nucleotide sequence ID" value="XM_005206102.5"/>
</dbReference>
<dbReference type="RefSeq" id="XP_010803126.1">
    <property type="nucleotide sequence ID" value="XM_010804824.2"/>
</dbReference>
<dbReference type="RefSeq" id="XP_015326402.1">
    <property type="nucleotide sequence ID" value="XM_015470916.1"/>
</dbReference>
<dbReference type="RefSeq" id="XP_024847173.1">
    <property type="nucleotide sequence ID" value="XM_024991405.2"/>
</dbReference>
<dbReference type="SMR" id="Q861R0"/>
<dbReference type="FunCoup" id="Q861R0">
    <property type="interactions" value="121"/>
</dbReference>
<dbReference type="STRING" id="9913.ENSBTAP00000069411"/>
<dbReference type="PaxDb" id="9913-ENSBTAP00000015929"/>
<dbReference type="Ensembl" id="ENSBTAT00000015929.3">
    <property type="protein sequence ID" value="ENSBTAP00000015929.2"/>
    <property type="gene ID" value="ENSBTAG00000012007.4"/>
</dbReference>
<dbReference type="GeneID" id="338437"/>
<dbReference type="KEGG" id="bta:338437"/>
<dbReference type="CTD" id="8835"/>
<dbReference type="VEuPathDB" id="HostDB:ENSBTAG00000012007"/>
<dbReference type="VGNC" id="VGNC:35120">
    <property type="gene designation" value="SOCS2"/>
</dbReference>
<dbReference type="eggNOG" id="KOG4566">
    <property type="taxonomic scope" value="Eukaryota"/>
</dbReference>
<dbReference type="GeneTree" id="ENSGT00940000157983"/>
<dbReference type="HOGENOM" id="CLU_079452_4_0_1"/>
<dbReference type="InParanoid" id="Q861R0"/>
<dbReference type="OrthoDB" id="10063348at2759"/>
<dbReference type="TreeFam" id="TF321368"/>
<dbReference type="Reactome" id="R-BTA-8951664">
    <property type="pathway name" value="Neddylation"/>
</dbReference>
<dbReference type="Reactome" id="R-BTA-9706369">
    <property type="pathway name" value="Negative regulation of FLT3"/>
</dbReference>
<dbReference type="UniPathway" id="UPA00143"/>
<dbReference type="Proteomes" id="UP000009136">
    <property type="component" value="Chromosome 5"/>
</dbReference>
<dbReference type="Bgee" id="ENSBTAG00000012007">
    <property type="expression patterns" value="Expressed in myometrium and 102 other cell types or tissues"/>
</dbReference>
<dbReference type="GO" id="GO:0031466">
    <property type="term" value="C:Cul5-RING ubiquitin ligase complex"/>
    <property type="evidence" value="ECO:0000250"/>
    <property type="project" value="UniProtKB"/>
</dbReference>
<dbReference type="GO" id="GO:0005737">
    <property type="term" value="C:cytoplasm"/>
    <property type="evidence" value="ECO:0007669"/>
    <property type="project" value="UniProtKB-SubCell"/>
</dbReference>
<dbReference type="GO" id="GO:0005126">
    <property type="term" value="F:cytokine receptor binding"/>
    <property type="evidence" value="ECO:0000318"/>
    <property type="project" value="GO_Central"/>
</dbReference>
<dbReference type="GO" id="GO:0140031">
    <property type="term" value="F:phosphorylation-dependent protein binding"/>
    <property type="evidence" value="ECO:0000250"/>
    <property type="project" value="UniProtKB"/>
</dbReference>
<dbReference type="GO" id="GO:1990756">
    <property type="term" value="F:ubiquitin-like ligase-substrate adaptor activity"/>
    <property type="evidence" value="ECO:0000250"/>
    <property type="project" value="UniProtKB"/>
</dbReference>
<dbReference type="GO" id="GO:0019221">
    <property type="term" value="P:cytokine-mediated signaling pathway"/>
    <property type="evidence" value="ECO:0000318"/>
    <property type="project" value="GO_Central"/>
</dbReference>
<dbReference type="GO" id="GO:0035556">
    <property type="term" value="P:intracellular signal transduction"/>
    <property type="evidence" value="ECO:0007669"/>
    <property type="project" value="InterPro"/>
</dbReference>
<dbReference type="GO" id="GO:0060400">
    <property type="term" value="P:negative regulation of growth hormone receptor signaling pathway"/>
    <property type="evidence" value="ECO:0000250"/>
    <property type="project" value="UniProtKB"/>
</dbReference>
<dbReference type="GO" id="GO:0046426">
    <property type="term" value="P:negative regulation of receptor signaling pathway via JAK-STAT"/>
    <property type="evidence" value="ECO:0000318"/>
    <property type="project" value="GO_Central"/>
</dbReference>
<dbReference type="GO" id="GO:0043161">
    <property type="term" value="P:proteasome-mediated ubiquitin-dependent protein catabolic process"/>
    <property type="evidence" value="ECO:0000250"/>
    <property type="project" value="UniProtKB"/>
</dbReference>
<dbReference type="GO" id="GO:0016567">
    <property type="term" value="P:protein ubiquitination"/>
    <property type="evidence" value="ECO:0007669"/>
    <property type="project" value="UniProtKB-UniPathway"/>
</dbReference>
<dbReference type="CDD" id="cd10383">
    <property type="entry name" value="SH2_SOCS2"/>
    <property type="match status" value="1"/>
</dbReference>
<dbReference type="CDD" id="cd03736">
    <property type="entry name" value="SOCS_SOCS2"/>
    <property type="match status" value="1"/>
</dbReference>
<dbReference type="FunFam" id="1.10.750.20:FF:000002">
    <property type="entry name" value="Suppressor of cytokine signaling 2"/>
    <property type="match status" value="1"/>
</dbReference>
<dbReference type="FunFam" id="3.30.505.10:FF:000049">
    <property type="entry name" value="Suppressor of cytokine signaling 2"/>
    <property type="match status" value="1"/>
</dbReference>
<dbReference type="Gene3D" id="3.30.505.10">
    <property type="entry name" value="SH2 domain"/>
    <property type="match status" value="1"/>
</dbReference>
<dbReference type="Gene3D" id="1.10.750.20">
    <property type="entry name" value="SOCS box"/>
    <property type="match status" value="1"/>
</dbReference>
<dbReference type="InterPro" id="IPR000980">
    <property type="entry name" value="SH2"/>
</dbReference>
<dbReference type="InterPro" id="IPR036860">
    <property type="entry name" value="SH2_dom_sf"/>
</dbReference>
<dbReference type="InterPro" id="IPR035862">
    <property type="entry name" value="SOCS2_SH2"/>
</dbReference>
<dbReference type="InterPro" id="IPR028410">
    <property type="entry name" value="SOCS2_SOCS_box"/>
</dbReference>
<dbReference type="InterPro" id="IPR001496">
    <property type="entry name" value="SOCS_box"/>
</dbReference>
<dbReference type="InterPro" id="IPR036036">
    <property type="entry name" value="SOCS_box-like_dom_sf"/>
</dbReference>
<dbReference type="PANTHER" id="PTHR10155">
    <property type="entry name" value="PHOSPHATIDYLINOSITOL 3-KINASE REGULATORY SUBUNIT"/>
    <property type="match status" value="1"/>
</dbReference>
<dbReference type="PANTHER" id="PTHR10155:SF7">
    <property type="entry name" value="SUPPRESSOR OF CYTOKINE SIGNALING 2"/>
    <property type="match status" value="1"/>
</dbReference>
<dbReference type="Pfam" id="PF00017">
    <property type="entry name" value="SH2"/>
    <property type="match status" value="1"/>
</dbReference>
<dbReference type="Pfam" id="PF07525">
    <property type="entry name" value="SOCS_box"/>
    <property type="match status" value="1"/>
</dbReference>
<dbReference type="PRINTS" id="PR00401">
    <property type="entry name" value="SH2DOMAIN"/>
</dbReference>
<dbReference type="SMART" id="SM00252">
    <property type="entry name" value="SH2"/>
    <property type="match status" value="1"/>
</dbReference>
<dbReference type="SMART" id="SM00253">
    <property type="entry name" value="SOCS"/>
    <property type="match status" value="1"/>
</dbReference>
<dbReference type="SMART" id="SM00969">
    <property type="entry name" value="SOCS_box"/>
    <property type="match status" value="1"/>
</dbReference>
<dbReference type="SUPFAM" id="SSF55550">
    <property type="entry name" value="SH2 domain"/>
    <property type="match status" value="1"/>
</dbReference>
<dbReference type="SUPFAM" id="SSF158235">
    <property type="entry name" value="SOCS box-like"/>
    <property type="match status" value="1"/>
</dbReference>
<dbReference type="PROSITE" id="PS50001">
    <property type="entry name" value="SH2"/>
    <property type="match status" value="1"/>
</dbReference>
<dbReference type="PROSITE" id="PS50225">
    <property type="entry name" value="SOCS"/>
    <property type="match status" value="1"/>
</dbReference>
<keyword id="KW-0963">Cytoplasm</keyword>
<keyword id="KW-0341">Growth regulation</keyword>
<keyword id="KW-1017">Isopeptide bond</keyword>
<keyword id="KW-0597">Phosphoprotein</keyword>
<keyword id="KW-1185">Reference proteome</keyword>
<keyword id="KW-0727">SH2 domain</keyword>
<keyword id="KW-0734">Signal transduction inhibitor</keyword>
<keyword id="KW-0832">Ubl conjugation</keyword>
<keyword id="KW-0833">Ubl conjugation pathway</keyword>
<protein>
    <recommendedName>
        <fullName>Suppressor of cytokine signaling 2</fullName>
        <shortName>SOCS-2</shortName>
    </recommendedName>
</protein>
<evidence type="ECO:0000250" key="1">
    <source>
        <dbReference type="UniProtKB" id="O14508"/>
    </source>
</evidence>
<evidence type="ECO:0000250" key="2">
    <source>
        <dbReference type="UniProtKB" id="O35717"/>
    </source>
</evidence>
<evidence type="ECO:0000255" key="3">
    <source>
        <dbReference type="PROSITE-ProRule" id="PRU00191"/>
    </source>
</evidence>
<evidence type="ECO:0000255" key="4">
    <source>
        <dbReference type="PROSITE-ProRule" id="PRU00194"/>
    </source>
</evidence>
<evidence type="ECO:0000256" key="5">
    <source>
        <dbReference type="SAM" id="MobiDB-lite"/>
    </source>
</evidence>
<evidence type="ECO:0000305" key="6"/>
<feature type="chain" id="PRO_0000236239" description="Suppressor of cytokine signaling 2">
    <location>
        <begin position="1"/>
        <end position="198"/>
    </location>
</feature>
<feature type="domain" description="SH2" evidence="3">
    <location>
        <begin position="48"/>
        <end position="156"/>
    </location>
</feature>
<feature type="domain" description="SOCS box" evidence="4">
    <location>
        <begin position="151"/>
        <end position="197"/>
    </location>
</feature>
<feature type="region of interest" description="Interaction with AREL1" evidence="1">
    <location>
        <begin position="1"/>
        <end position="75"/>
    </location>
</feature>
<feature type="region of interest" description="Disordered" evidence="5">
    <location>
        <begin position="6"/>
        <end position="30"/>
    </location>
</feature>
<feature type="compositionally biased region" description="Polar residues" evidence="5">
    <location>
        <begin position="8"/>
        <end position="22"/>
    </location>
</feature>
<feature type="modified residue" description="Phosphoserine" evidence="1">
    <location>
        <position position="30"/>
    </location>
</feature>
<feature type="modified residue" description="Phosphoserine" evidence="1">
    <location>
        <position position="52"/>
    </location>
</feature>
<feature type="cross-link" description="Glycyl lysine isopeptide (Lys-Gly) (interchain with G-Cter in ubiquitin)" evidence="1">
    <location>
        <position position="173"/>
    </location>
</feature>
<feature type="sequence conflict" description="In Ref. 2; AAI14663." evidence="6" ref="2">
    <original>R</original>
    <variation>P</variation>
    <location>
        <position position="35"/>
    </location>
</feature>
<organism>
    <name type="scientific">Bos taurus</name>
    <name type="common">Bovine</name>
    <dbReference type="NCBI Taxonomy" id="9913"/>
    <lineage>
        <taxon>Eukaryota</taxon>
        <taxon>Metazoa</taxon>
        <taxon>Chordata</taxon>
        <taxon>Craniata</taxon>
        <taxon>Vertebrata</taxon>
        <taxon>Euteleostomi</taxon>
        <taxon>Mammalia</taxon>
        <taxon>Eutheria</taxon>
        <taxon>Laurasiatheria</taxon>
        <taxon>Artiodactyla</taxon>
        <taxon>Ruminantia</taxon>
        <taxon>Pecora</taxon>
        <taxon>Bovidae</taxon>
        <taxon>Bovinae</taxon>
        <taxon>Bos</taxon>
    </lineage>
</organism>